<accession>P0DW49</accession>
<reference evidence="7" key="1">
    <citation type="submission" date="2013-04" db="EMBL/GenBank/DDBJ databases">
        <authorList>
            <person name="Kyrpides N."/>
            <person name="Huntemann M."/>
            <person name="Han J."/>
            <person name="Chen A."/>
            <person name="Mavromatis K."/>
            <person name="Markowitz V."/>
            <person name="Palaniappan K."/>
            <person name="Ivanova N."/>
            <person name="Schaumberg A."/>
            <person name="Pati A."/>
            <person name="Liolios K."/>
            <person name="Nordberg H.P."/>
            <person name="Cantor M.N."/>
            <person name="Hua S.X."/>
            <person name="Woyke T."/>
        </authorList>
    </citation>
    <scope>NUCLEOTIDE SEQUENCE [LARGE SCALE GENOMIC DNA]</scope>
    <source>
        <strain>DSM 21542 / CCUG 56590 / IMMIB L-1110</strain>
    </source>
</reference>
<reference key="2">
    <citation type="journal article" date="2021" name="Nature">
        <title>Prokaryotic viperins produce diverse antiviral molecules.</title>
        <authorList>
            <person name="Bernheim A."/>
            <person name="Millman A."/>
            <person name="Ofir G."/>
            <person name="Meitav G."/>
            <person name="Avraham C."/>
            <person name="Shomar H."/>
            <person name="Rosenberg M.M."/>
            <person name="Tal N."/>
            <person name="Melamed S."/>
            <person name="Amitai G."/>
            <person name="Sorek R."/>
        </authorList>
    </citation>
    <scope>FUNCTION IN ANTIVIRAL DEFENSE</scope>
    <scope>FUNCTION IN DDHCTP AND DDHUTP SYNTHESIS</scope>
    <scope>CATALYTIC ACTIVITY</scope>
    <scope>PROBABLE COFACTOR</scope>
    <scope>MUTAGENESIS OF 22-CYS--CYS-29</scope>
    <source>
        <strain>DSM 21542 / CCUG 56590 / IMMIB L-1110</strain>
    </source>
</reference>
<reference key="3">
    <citation type="journal article" date="2022" name="Front. Mol. Biosci.">
        <title>Radical-SAM dependent nucleotide dehydratase (SAND), rectification of the names of an ancient iron-sulfur enzyme using NC-IUBMB recommendations.</title>
        <authorList>
            <person name="Ji Y."/>
            <person name="Wei L."/>
            <person name="Da A."/>
            <person name="Stark H."/>
            <person name="Hagedoorn P.-L."/>
            <person name="Ciofi-Baffoni S."/>
            <person name="Cowley S.A."/>
            <person name="Louro R.O."/>
            <person name="Todorovic S."/>
            <person name="Mroginski M.A."/>
            <person name="Nicolet Y."/>
            <person name="Roessler M.M."/>
            <person name="Le Brun N.E."/>
            <person name="Piccioli M."/>
            <person name="James W.S."/>
            <person name="Hagen W.R."/>
            <person name="Ebrahimi K.H."/>
        </authorList>
    </citation>
    <scope>NOMENCLATURE</scope>
</reference>
<dbReference type="EC" id="4.2.-.-" evidence="2"/>
<dbReference type="EMBL" id="KB907634">
    <property type="status" value="NOT_ANNOTATED_CDS"/>
    <property type="molecule type" value="Genomic_DNA"/>
</dbReference>
<dbReference type="RefSeq" id="WP_019672856.1">
    <property type="nucleotide sequence ID" value="NZ_KB907634.1"/>
</dbReference>
<dbReference type="SMR" id="P0DW49"/>
<dbReference type="OrthoDB" id="9792276at2"/>
<dbReference type="GO" id="GO:0051539">
    <property type="term" value="F:4 iron, 4 sulfur cluster binding"/>
    <property type="evidence" value="ECO:0007669"/>
    <property type="project" value="UniProtKB-KW"/>
</dbReference>
<dbReference type="GO" id="GO:0016829">
    <property type="term" value="F:lyase activity"/>
    <property type="evidence" value="ECO:0007669"/>
    <property type="project" value="UniProtKB-KW"/>
</dbReference>
<dbReference type="GO" id="GO:0046872">
    <property type="term" value="F:metal ion binding"/>
    <property type="evidence" value="ECO:0007669"/>
    <property type="project" value="UniProtKB-KW"/>
</dbReference>
<dbReference type="GO" id="GO:0051607">
    <property type="term" value="P:defense response to virus"/>
    <property type="evidence" value="ECO:0007669"/>
    <property type="project" value="UniProtKB-KW"/>
</dbReference>
<dbReference type="CDD" id="cd01335">
    <property type="entry name" value="Radical_SAM"/>
    <property type="match status" value="1"/>
</dbReference>
<dbReference type="Gene3D" id="3.20.20.70">
    <property type="entry name" value="Aldolase class I"/>
    <property type="match status" value="1"/>
</dbReference>
<dbReference type="InterPro" id="IPR013785">
    <property type="entry name" value="Aldolase_TIM"/>
</dbReference>
<dbReference type="InterPro" id="IPR051196">
    <property type="entry name" value="RSAD2/Viperin_antiviral"/>
</dbReference>
<dbReference type="InterPro" id="IPR007197">
    <property type="entry name" value="rSAM"/>
</dbReference>
<dbReference type="NCBIfam" id="NF038283">
    <property type="entry name" value="viperin_w_prok"/>
    <property type="match status" value="1"/>
</dbReference>
<dbReference type="PANTHER" id="PTHR21339">
    <property type="entry name" value="RADICAL S-ADENOSYL METHIONINE DOMAIN-CONTAINING PROTEIN 2"/>
    <property type="match status" value="1"/>
</dbReference>
<dbReference type="PANTHER" id="PTHR21339:SF0">
    <property type="entry name" value="S-ADENOSYLMETHIONINE-DEPENDENT NUCLEOTIDE DEHYDRATASE RSAD2"/>
    <property type="match status" value="1"/>
</dbReference>
<dbReference type="Pfam" id="PF13353">
    <property type="entry name" value="Fer4_12"/>
    <property type="match status" value="1"/>
</dbReference>
<dbReference type="Pfam" id="PF04055">
    <property type="entry name" value="Radical_SAM"/>
    <property type="match status" value="1"/>
</dbReference>
<dbReference type="SFLD" id="SFLDG01088">
    <property type="entry name" value="antiviral_proteins"/>
    <property type="match status" value="1"/>
</dbReference>
<dbReference type="SFLD" id="SFLDS00029">
    <property type="entry name" value="Radical_SAM"/>
    <property type="match status" value="1"/>
</dbReference>
<dbReference type="SFLD" id="SFLDG01067">
    <property type="entry name" value="SPASM/twitch_domain_containing"/>
    <property type="match status" value="1"/>
</dbReference>
<dbReference type="SUPFAM" id="SSF102114">
    <property type="entry name" value="Radical SAM enzymes"/>
    <property type="match status" value="1"/>
</dbReference>
<dbReference type="PROSITE" id="PS51918">
    <property type="entry name" value="RADICAL_SAM"/>
    <property type="match status" value="1"/>
</dbReference>
<feature type="chain" id="PRO_0000456418" description="S-adenosylmethionine-dependent nucleotide dehydratase">
    <location>
        <begin position="1"/>
        <end position="298"/>
    </location>
</feature>
<feature type="domain" description="Radical SAM core" evidence="1">
    <location>
        <begin position="8"/>
        <end position="235"/>
    </location>
</feature>
<feature type="binding site" evidence="1">
    <location>
        <position position="22"/>
    </location>
    <ligand>
        <name>[4Fe-4S] cluster</name>
        <dbReference type="ChEBI" id="CHEBI:49883"/>
        <note>4Fe-4S-S-AdoMet</note>
    </ligand>
</feature>
<feature type="binding site" evidence="1">
    <location>
        <position position="26"/>
    </location>
    <ligand>
        <name>[4Fe-4S] cluster</name>
        <dbReference type="ChEBI" id="CHEBI:49883"/>
        <note>4Fe-4S-S-AdoMet</note>
    </ligand>
</feature>
<feature type="binding site" evidence="1">
    <location>
        <position position="29"/>
    </location>
    <ligand>
        <name>[4Fe-4S] cluster</name>
        <dbReference type="ChEBI" id="CHEBI:49883"/>
        <note>4Fe-4S-S-AdoMet</note>
    </ligand>
</feature>
<feature type="mutagenesis site" description="No longer protects against T7, no longer represses T7 promoter." evidence="2">
    <original>CNYRCGYC</original>
    <variation>ANYRAGYA</variation>
    <location>
        <begin position="22"/>
        <end position="29"/>
    </location>
</feature>
<protein>
    <recommendedName>
        <fullName evidence="4">S-adenosylmethionine-dependent nucleotide dehydratase</fullName>
        <shortName evidence="4">SAND</shortName>
        <ecNumber evidence="2">4.2.-.-</ecNumber>
    </recommendedName>
    <alternativeName>
        <fullName>Prokaryotic viperin protein pVip8</fullName>
        <shortName evidence="3">pVip8</shortName>
    </alternativeName>
</protein>
<evidence type="ECO:0000255" key="1">
    <source>
        <dbReference type="PROSITE-ProRule" id="PRU01266"/>
    </source>
</evidence>
<evidence type="ECO:0000269" key="2">
    <source>
    </source>
</evidence>
<evidence type="ECO:0000303" key="3">
    <source>
    </source>
</evidence>
<evidence type="ECO:0000303" key="4">
    <source>
    </source>
</evidence>
<evidence type="ECO:0000305" key="5"/>
<evidence type="ECO:0000305" key="6">
    <source>
    </source>
</evidence>
<evidence type="ECO:0000312" key="7">
    <source>
        <dbReference type="EMBL" id="KB907634"/>
    </source>
</evidence>
<proteinExistence type="evidence at protein level"/>
<comment type="function">
    <text evidence="2">Expression of pVip8 in E.coli (strain MG1655) confers resistance to phages lambda, P1, SECphi8 and T7. Prevents culture collapse upon infection with T7. Catalyzes the conversion of cytidine triphosphate (CTP) to 3'-deoxy-3',4'-didehydro-CTP (ddhCTP) and uridine triphosphate (UTP) to 3'-deoxy-3',4'-didehydro-UTP (ddhUTP), probably via a SAM-dependent radical mechanism. The modified nucleotides repress transcription from T7 RNA polymerase-directed genes (possibly by acting as chain terminators), strongly suggesting these nucleotides block viral polymerase transcription.</text>
</comment>
<comment type="catalytic activity">
    <reaction evidence="2">
        <text>CTP + AH2 + S-adenosyl-L-methionine = 3'-deoxy-3',4'-didehydro-CTP + 5'-deoxyadenosine + L-methionine + A + H2O + H(+)</text>
        <dbReference type="Rhea" id="RHEA:65944"/>
        <dbReference type="ChEBI" id="CHEBI:13193"/>
        <dbReference type="ChEBI" id="CHEBI:15377"/>
        <dbReference type="ChEBI" id="CHEBI:15378"/>
        <dbReference type="ChEBI" id="CHEBI:17319"/>
        <dbReference type="ChEBI" id="CHEBI:17499"/>
        <dbReference type="ChEBI" id="CHEBI:37563"/>
        <dbReference type="ChEBI" id="CHEBI:57844"/>
        <dbReference type="ChEBI" id="CHEBI:59789"/>
        <dbReference type="ChEBI" id="CHEBI:166821"/>
    </reaction>
    <physiologicalReaction direction="left-to-right" evidence="2">
        <dbReference type="Rhea" id="RHEA:65945"/>
    </physiologicalReaction>
</comment>
<comment type="catalytic activity">
    <reaction evidence="2">
        <text>UTP + AH2 + S-adenosyl-L-methionine = 3'-deoxy-3',4'-didehydro-UTP + 5'-deoxyadenosine + L-methionine + A + H2O + H(+)</text>
        <dbReference type="Rhea" id="RHEA:72147"/>
        <dbReference type="ChEBI" id="CHEBI:13193"/>
        <dbReference type="ChEBI" id="CHEBI:15377"/>
        <dbReference type="ChEBI" id="CHEBI:15378"/>
        <dbReference type="ChEBI" id="CHEBI:17319"/>
        <dbReference type="ChEBI" id="CHEBI:17499"/>
        <dbReference type="ChEBI" id="CHEBI:46398"/>
        <dbReference type="ChEBI" id="CHEBI:57844"/>
        <dbReference type="ChEBI" id="CHEBI:59789"/>
        <dbReference type="ChEBI" id="CHEBI:191858"/>
    </reaction>
    <physiologicalReaction direction="left-to-right" evidence="2">
        <dbReference type="Rhea" id="RHEA:72148"/>
    </physiologicalReaction>
</comment>
<comment type="cofactor">
    <cofactor evidence="1 6">
        <name>[4Fe-4S] cluster</name>
        <dbReference type="ChEBI" id="CHEBI:49883"/>
    </cofactor>
</comment>
<comment type="miscellaneous">
    <text evidence="6">How this protein allows bacteria to resist viruses that do not encode their own RNA polymerase (such as lambda, P1) is unknown.</text>
</comment>
<comment type="similarity">
    <text evidence="6">Belongs to the radical SAM superfamily. Viperin family.</text>
</comment>
<sequence>MHNHNKIANKELVVNWHITEACNYRCGYCFAKWGKQKGELIQDVASISQLMDAISGLPAVLNQMHAANFEGVRLNLVGGETFLNYRKIKEVVKQAKKRGLKLSAITNGSRINNDFINLIANNFASIGFSVDSVDNSTNLNIGRVEKNAVMNPEKIIHTIASIRAINPKIEIKVNTVVSDLNKSEDLSDFIGQVMPNKWKIFKVLPVVANHHLISEEQFTRFLRRHQRFGEIIYAEDNTEMVDSYIMIDPIGRFFQNSDFNNGYYYSRPILQVGIHQAFNEINFNANKFYSRYKRASLN</sequence>
<keyword id="KW-0004">4Fe-4S</keyword>
<keyword id="KW-0051">Antiviral defense</keyword>
<keyword id="KW-0408">Iron</keyword>
<keyword id="KW-0411">Iron-sulfur</keyword>
<keyword id="KW-0456">Lyase</keyword>
<keyword id="KW-0479">Metal-binding</keyword>
<keyword id="KW-0949">S-adenosyl-L-methionine</keyword>
<name>SAND_PSYL1</name>
<gene>
    <name evidence="5" type="primary">vip8</name>
    <name evidence="7" type="ORF">H140DRAFT_01293</name>
</gene>
<organism>
    <name type="scientific">Psychrobacter lutiphocae (strain DSM 21542 / CCUG 56590 / IMMIB L-1110)</name>
    <dbReference type="NCBI Taxonomy" id="1123033"/>
    <lineage>
        <taxon>Bacteria</taxon>
        <taxon>Pseudomonadati</taxon>
        <taxon>Pseudomonadota</taxon>
        <taxon>Gammaproteobacteria</taxon>
        <taxon>Moraxellales</taxon>
        <taxon>Moraxellaceae</taxon>
        <taxon>Psychrobacter</taxon>
    </lineage>
</organism>